<keyword id="KW-0963">Cytoplasm</keyword>
<keyword id="KW-0539">Nucleus</keyword>
<keyword id="KW-1185">Reference proteome</keyword>
<feature type="chain" id="PRO_0000116524" description="Restriction of telomere capping protein 5">
    <location>
        <begin position="1"/>
        <end position="511"/>
    </location>
</feature>
<feature type="domain" description="TLDc" evidence="2">
    <location>
        <begin position="274"/>
        <end position="499"/>
    </location>
</feature>
<organism>
    <name type="scientific">Schizosaccharomyces pombe (strain 972 / ATCC 24843)</name>
    <name type="common">Fission yeast</name>
    <dbReference type="NCBI Taxonomy" id="284812"/>
    <lineage>
        <taxon>Eukaryota</taxon>
        <taxon>Fungi</taxon>
        <taxon>Dikarya</taxon>
        <taxon>Ascomycota</taxon>
        <taxon>Taphrinomycotina</taxon>
        <taxon>Schizosaccharomycetes</taxon>
        <taxon>Schizosaccharomycetales</taxon>
        <taxon>Schizosaccharomycetaceae</taxon>
        <taxon>Schizosaccharomyces</taxon>
    </lineage>
</organism>
<dbReference type="EMBL" id="CU329671">
    <property type="protein sequence ID" value="CAB36882.1"/>
    <property type="molecule type" value="Genomic_DNA"/>
</dbReference>
<dbReference type="PIR" id="T39884">
    <property type="entry name" value="T39884"/>
</dbReference>
<dbReference type="RefSeq" id="NP_596336.1">
    <property type="nucleotide sequence ID" value="NM_001022257.2"/>
</dbReference>
<dbReference type="SMR" id="O94644"/>
<dbReference type="FunCoup" id="O94644">
    <property type="interactions" value="11"/>
</dbReference>
<dbReference type="STRING" id="284812.O94644"/>
<dbReference type="SwissPalm" id="O94644"/>
<dbReference type="PaxDb" id="4896-SPBC21.02.1"/>
<dbReference type="EnsemblFungi" id="SPBC21.02.1">
    <property type="protein sequence ID" value="SPBC21.02.1:pep"/>
    <property type="gene ID" value="SPBC21.02"/>
</dbReference>
<dbReference type="GeneID" id="2540756"/>
<dbReference type="KEGG" id="spo:2540756"/>
<dbReference type="PomBase" id="SPBC21.02">
    <property type="gene designation" value="rtc5"/>
</dbReference>
<dbReference type="VEuPathDB" id="FungiDB:SPBC21.02"/>
<dbReference type="eggNOG" id="ENOG502QV3R">
    <property type="taxonomic scope" value="Eukaryota"/>
</dbReference>
<dbReference type="HOGENOM" id="CLU_533359_0_0_1"/>
<dbReference type="InParanoid" id="O94644"/>
<dbReference type="OMA" id="AYITTPW"/>
<dbReference type="PhylomeDB" id="O94644"/>
<dbReference type="PRO" id="PR:O94644"/>
<dbReference type="Proteomes" id="UP000002485">
    <property type="component" value="Chromosome II"/>
</dbReference>
<dbReference type="GO" id="GO:0005829">
    <property type="term" value="C:cytosol"/>
    <property type="evidence" value="ECO:0007005"/>
    <property type="project" value="PomBase"/>
</dbReference>
<dbReference type="GO" id="GO:0005634">
    <property type="term" value="C:nucleus"/>
    <property type="evidence" value="ECO:0007005"/>
    <property type="project" value="PomBase"/>
</dbReference>
<dbReference type="GO" id="GO:0006979">
    <property type="term" value="P:response to oxidative stress"/>
    <property type="evidence" value="ECO:0000318"/>
    <property type="project" value="GO_Central"/>
</dbReference>
<dbReference type="InterPro" id="IPR006571">
    <property type="entry name" value="TLDc_dom"/>
</dbReference>
<dbReference type="PANTHER" id="PTHR23354">
    <property type="entry name" value="NUCLEOLAR PROTEIN 7/ESTROGEN RECEPTOR COACTIVATOR-RELATED"/>
    <property type="match status" value="1"/>
</dbReference>
<dbReference type="PANTHER" id="PTHR23354:SF130">
    <property type="entry name" value="RESTRICTION OF TELOMERE CAPPING PROTEIN 5"/>
    <property type="match status" value="1"/>
</dbReference>
<dbReference type="Pfam" id="PF07534">
    <property type="entry name" value="TLD"/>
    <property type="match status" value="1"/>
</dbReference>
<dbReference type="SMART" id="SM00584">
    <property type="entry name" value="TLDc"/>
    <property type="match status" value="1"/>
</dbReference>
<dbReference type="PROSITE" id="PS51886">
    <property type="entry name" value="TLDC"/>
    <property type="match status" value="1"/>
</dbReference>
<accession>O94644</accession>
<comment type="function">
    <text evidence="1">May be involved in a process influencing telomere capping.</text>
</comment>
<comment type="subcellular location">
    <subcellularLocation>
        <location evidence="3">Cytoplasm</location>
    </subcellularLocation>
    <subcellularLocation>
        <location evidence="3">Nucleus</location>
    </subcellularLocation>
</comment>
<comment type="similarity">
    <text evidence="4">Belongs to the RTC5 family.</text>
</comment>
<gene>
    <name type="primary">rtc5</name>
    <name type="ORF">SPBC21.02</name>
</gene>
<evidence type="ECO:0000250" key="1"/>
<evidence type="ECO:0000255" key="2">
    <source>
        <dbReference type="PROSITE-ProRule" id="PRU01234"/>
    </source>
</evidence>
<evidence type="ECO:0000269" key="3">
    <source>
    </source>
</evidence>
<evidence type="ECO:0000305" key="4"/>
<proteinExistence type="inferred from homology"/>
<name>RTC5_SCHPO</name>
<sequence length="511" mass="58748">MGQKESQFKVLWQLQTHEEYMKQTSSFLRDFNALERYNLKENFEALSSFDNGEKIWVEDAFTTFFGIPDVIQLSPFFYRSACSFGRDLNINRQRLTFSALARFLASYTGRHKDVWSDFESNLMIIASWCDSFPKFRVEVLKNSKQISRLIHSDVQNISNFFDQNFGIRRSNIYQLCLLLLCISKLKPGESVGCHINSFLDSMFVKEQKAAFYVLQGISPDISSNIIKPSYLLHFLESNPYFLKSLGSLFELALFPHSAHNQKVQDDVSPLNDFAILSPLIHAQICFFLPKSVWQVNGLTSLFRASFHGYSMYALERKMCNYHNPSILLIKAKKINANHKSSSRPISLDATIPRKYPPHCIGTDKAVPQKFGADFHNENILLGAYISTRWRQSHMGFFGDHSTLLFQLQPIHQVYYASNLDKNYCMFDKNVGLGFGLSRHKVTNKVQYDVPGVCMYIDDGLEYGLFRHAGDGAFKPATNYENFEYEERFLIQDLEVIGVDTTKPVEPIHIGL</sequence>
<reference key="1">
    <citation type="journal article" date="2002" name="Nature">
        <title>The genome sequence of Schizosaccharomyces pombe.</title>
        <authorList>
            <person name="Wood V."/>
            <person name="Gwilliam R."/>
            <person name="Rajandream M.A."/>
            <person name="Lyne M.H."/>
            <person name="Lyne R."/>
            <person name="Stewart A."/>
            <person name="Sgouros J.G."/>
            <person name="Peat N."/>
            <person name="Hayles J."/>
            <person name="Baker S.G."/>
            <person name="Basham D."/>
            <person name="Bowman S."/>
            <person name="Brooks K."/>
            <person name="Brown D."/>
            <person name="Brown S."/>
            <person name="Chillingworth T."/>
            <person name="Churcher C.M."/>
            <person name="Collins M."/>
            <person name="Connor R."/>
            <person name="Cronin A."/>
            <person name="Davis P."/>
            <person name="Feltwell T."/>
            <person name="Fraser A."/>
            <person name="Gentles S."/>
            <person name="Goble A."/>
            <person name="Hamlin N."/>
            <person name="Harris D.E."/>
            <person name="Hidalgo J."/>
            <person name="Hodgson G."/>
            <person name="Holroyd S."/>
            <person name="Hornsby T."/>
            <person name="Howarth S."/>
            <person name="Huckle E.J."/>
            <person name="Hunt S."/>
            <person name="Jagels K."/>
            <person name="James K.D."/>
            <person name="Jones L."/>
            <person name="Jones M."/>
            <person name="Leather S."/>
            <person name="McDonald S."/>
            <person name="McLean J."/>
            <person name="Mooney P."/>
            <person name="Moule S."/>
            <person name="Mungall K.L."/>
            <person name="Murphy L.D."/>
            <person name="Niblett D."/>
            <person name="Odell C."/>
            <person name="Oliver K."/>
            <person name="O'Neil S."/>
            <person name="Pearson D."/>
            <person name="Quail M.A."/>
            <person name="Rabbinowitsch E."/>
            <person name="Rutherford K.M."/>
            <person name="Rutter S."/>
            <person name="Saunders D."/>
            <person name="Seeger K."/>
            <person name="Sharp S."/>
            <person name="Skelton J."/>
            <person name="Simmonds M.N."/>
            <person name="Squares R."/>
            <person name="Squares S."/>
            <person name="Stevens K."/>
            <person name="Taylor K."/>
            <person name="Taylor R.G."/>
            <person name="Tivey A."/>
            <person name="Walsh S.V."/>
            <person name="Warren T."/>
            <person name="Whitehead S."/>
            <person name="Woodward J.R."/>
            <person name="Volckaert G."/>
            <person name="Aert R."/>
            <person name="Robben J."/>
            <person name="Grymonprez B."/>
            <person name="Weltjens I."/>
            <person name="Vanstreels E."/>
            <person name="Rieger M."/>
            <person name="Schaefer M."/>
            <person name="Mueller-Auer S."/>
            <person name="Gabel C."/>
            <person name="Fuchs M."/>
            <person name="Duesterhoeft A."/>
            <person name="Fritzc C."/>
            <person name="Holzer E."/>
            <person name="Moestl D."/>
            <person name="Hilbert H."/>
            <person name="Borzym K."/>
            <person name="Langer I."/>
            <person name="Beck A."/>
            <person name="Lehrach H."/>
            <person name="Reinhardt R."/>
            <person name="Pohl T.M."/>
            <person name="Eger P."/>
            <person name="Zimmermann W."/>
            <person name="Wedler H."/>
            <person name="Wambutt R."/>
            <person name="Purnelle B."/>
            <person name="Goffeau A."/>
            <person name="Cadieu E."/>
            <person name="Dreano S."/>
            <person name="Gloux S."/>
            <person name="Lelaure V."/>
            <person name="Mottier S."/>
            <person name="Galibert F."/>
            <person name="Aves S.J."/>
            <person name="Xiang Z."/>
            <person name="Hunt C."/>
            <person name="Moore K."/>
            <person name="Hurst S.M."/>
            <person name="Lucas M."/>
            <person name="Rochet M."/>
            <person name="Gaillardin C."/>
            <person name="Tallada V.A."/>
            <person name="Garzon A."/>
            <person name="Thode G."/>
            <person name="Daga R.R."/>
            <person name="Cruzado L."/>
            <person name="Jimenez J."/>
            <person name="Sanchez M."/>
            <person name="del Rey F."/>
            <person name="Benito J."/>
            <person name="Dominguez A."/>
            <person name="Revuelta J.L."/>
            <person name="Moreno S."/>
            <person name="Armstrong J."/>
            <person name="Forsburg S.L."/>
            <person name="Cerutti L."/>
            <person name="Lowe T."/>
            <person name="McCombie W.R."/>
            <person name="Paulsen I."/>
            <person name="Potashkin J."/>
            <person name="Shpakovski G.V."/>
            <person name="Ussery D."/>
            <person name="Barrell B.G."/>
            <person name="Nurse P."/>
        </authorList>
    </citation>
    <scope>NUCLEOTIDE SEQUENCE [LARGE SCALE GENOMIC DNA]</scope>
    <source>
        <strain>972 / ATCC 24843</strain>
    </source>
</reference>
<reference key="2">
    <citation type="journal article" date="2006" name="Nat. Biotechnol.">
        <title>ORFeome cloning and global analysis of protein localization in the fission yeast Schizosaccharomyces pombe.</title>
        <authorList>
            <person name="Matsuyama A."/>
            <person name="Arai R."/>
            <person name="Yashiroda Y."/>
            <person name="Shirai A."/>
            <person name="Kamata A."/>
            <person name="Sekido S."/>
            <person name="Kobayashi Y."/>
            <person name="Hashimoto A."/>
            <person name="Hamamoto M."/>
            <person name="Hiraoka Y."/>
            <person name="Horinouchi S."/>
            <person name="Yoshida M."/>
        </authorList>
    </citation>
    <scope>SUBCELLULAR LOCATION [LARGE SCALE ANALYSIS]</scope>
</reference>
<protein>
    <recommendedName>
        <fullName>Restriction of telomere capping protein 5</fullName>
    </recommendedName>
</protein>